<reference key="1">
    <citation type="journal article" date="2001" name="Cancer Res.">
        <title>Cell surface tumor endothelial markers are conserved in mice and humans.</title>
        <authorList>
            <person name="Carson-Walter E.B."/>
            <person name="Watkins D.N."/>
            <person name="Nanda A."/>
            <person name="Vogelstein B."/>
            <person name="Kinzler K.W."/>
            <person name="St Croix B."/>
        </authorList>
    </citation>
    <scope>NUCLEOTIDE SEQUENCE [MRNA]</scope>
</reference>
<reference key="2">
    <citation type="submission" date="2005-07" db="EMBL/GenBank/DDBJ databases">
        <authorList>
            <person name="Mural R.J."/>
            <person name="Istrail S."/>
            <person name="Sutton G.G."/>
            <person name="Florea L."/>
            <person name="Halpern A.L."/>
            <person name="Mobarry C.M."/>
            <person name="Lippert R."/>
            <person name="Walenz B."/>
            <person name="Shatkay H."/>
            <person name="Dew I."/>
            <person name="Miller J.R."/>
            <person name="Flanigan M.J."/>
            <person name="Edwards N.J."/>
            <person name="Bolanos R."/>
            <person name="Fasulo D."/>
            <person name="Halldorsson B.V."/>
            <person name="Hannenhalli S."/>
            <person name="Turner R."/>
            <person name="Yooseph S."/>
            <person name="Lu F."/>
            <person name="Nusskern D.R."/>
            <person name="Shue B.C."/>
            <person name="Zheng X.H."/>
            <person name="Zhong F."/>
            <person name="Delcher A.L."/>
            <person name="Huson D.H."/>
            <person name="Kravitz S.A."/>
            <person name="Mouchard L."/>
            <person name="Reinert K."/>
            <person name="Remington K.A."/>
            <person name="Clark A.G."/>
            <person name="Waterman M.S."/>
            <person name="Eichler E.E."/>
            <person name="Adams M.D."/>
            <person name="Hunkapiller M.W."/>
            <person name="Myers E.W."/>
            <person name="Venter J.C."/>
        </authorList>
    </citation>
    <scope>NUCLEOTIDE SEQUENCE [LARGE SCALE GENOMIC DNA]</scope>
</reference>
<reference key="3">
    <citation type="journal article" date="2004" name="Genome Res.">
        <title>The status, quality, and expansion of the NIH full-length cDNA project: the Mammalian Gene Collection (MGC).</title>
        <authorList>
            <consortium name="The MGC Project Team"/>
        </authorList>
    </citation>
    <scope>NUCLEOTIDE SEQUENCE [LARGE SCALE MRNA]</scope>
    <source>
        <tissue>Brain</tissue>
        <tissue>Colon</tissue>
    </source>
</reference>
<reference key="4">
    <citation type="journal article" date="2004" name="Nat. Genet.">
        <title>Complete sequencing and characterization of 21,243 full-length human cDNAs.</title>
        <authorList>
            <person name="Ota T."/>
            <person name="Suzuki Y."/>
            <person name="Nishikawa T."/>
            <person name="Otsuki T."/>
            <person name="Sugiyama T."/>
            <person name="Irie R."/>
            <person name="Wakamatsu A."/>
            <person name="Hayashi K."/>
            <person name="Sato H."/>
            <person name="Nagai K."/>
            <person name="Kimura K."/>
            <person name="Makita H."/>
            <person name="Sekine M."/>
            <person name="Obayashi M."/>
            <person name="Nishi T."/>
            <person name="Shibahara T."/>
            <person name="Tanaka T."/>
            <person name="Ishii S."/>
            <person name="Yamamoto J."/>
            <person name="Saito K."/>
            <person name="Kawai Y."/>
            <person name="Isono Y."/>
            <person name="Nakamura Y."/>
            <person name="Nagahari K."/>
            <person name="Murakami K."/>
            <person name="Yasuda T."/>
            <person name="Iwayanagi T."/>
            <person name="Wagatsuma M."/>
            <person name="Shiratori A."/>
            <person name="Sudo H."/>
            <person name="Hosoiri T."/>
            <person name="Kaku Y."/>
            <person name="Kodaira H."/>
            <person name="Kondo H."/>
            <person name="Sugawara M."/>
            <person name="Takahashi M."/>
            <person name="Kanda K."/>
            <person name="Yokoi T."/>
            <person name="Furuya T."/>
            <person name="Kikkawa E."/>
            <person name="Omura Y."/>
            <person name="Abe K."/>
            <person name="Kamihara K."/>
            <person name="Katsuta N."/>
            <person name="Sato K."/>
            <person name="Tanikawa M."/>
            <person name="Yamazaki M."/>
            <person name="Ninomiya K."/>
            <person name="Ishibashi T."/>
            <person name="Yamashita H."/>
            <person name="Murakawa K."/>
            <person name="Fujimori K."/>
            <person name="Tanai H."/>
            <person name="Kimata M."/>
            <person name="Watanabe M."/>
            <person name="Hiraoka S."/>
            <person name="Chiba Y."/>
            <person name="Ishida S."/>
            <person name="Ono Y."/>
            <person name="Takiguchi S."/>
            <person name="Watanabe S."/>
            <person name="Yosida M."/>
            <person name="Hotuta T."/>
            <person name="Kusano J."/>
            <person name="Kanehori K."/>
            <person name="Takahashi-Fujii A."/>
            <person name="Hara H."/>
            <person name="Tanase T.-O."/>
            <person name="Nomura Y."/>
            <person name="Togiya S."/>
            <person name="Komai F."/>
            <person name="Hara R."/>
            <person name="Takeuchi K."/>
            <person name="Arita M."/>
            <person name="Imose N."/>
            <person name="Musashino K."/>
            <person name="Yuuki H."/>
            <person name="Oshima A."/>
            <person name="Sasaki N."/>
            <person name="Aotsuka S."/>
            <person name="Yoshikawa Y."/>
            <person name="Matsunawa H."/>
            <person name="Ichihara T."/>
            <person name="Shiohata N."/>
            <person name="Sano S."/>
            <person name="Moriya S."/>
            <person name="Momiyama H."/>
            <person name="Satoh N."/>
            <person name="Takami S."/>
            <person name="Terashima Y."/>
            <person name="Suzuki O."/>
            <person name="Nakagawa S."/>
            <person name="Senoh A."/>
            <person name="Mizoguchi H."/>
            <person name="Goto Y."/>
            <person name="Shimizu F."/>
            <person name="Wakebe H."/>
            <person name="Hishigaki H."/>
            <person name="Watanabe T."/>
            <person name="Sugiyama A."/>
            <person name="Takemoto M."/>
            <person name="Kawakami B."/>
            <person name="Yamazaki M."/>
            <person name="Watanabe K."/>
            <person name="Kumagai A."/>
            <person name="Itakura S."/>
            <person name="Fukuzumi Y."/>
            <person name="Fujimori Y."/>
            <person name="Komiyama M."/>
            <person name="Tashiro H."/>
            <person name="Tanigami A."/>
            <person name="Fujiwara T."/>
            <person name="Ono T."/>
            <person name="Yamada K."/>
            <person name="Fujii Y."/>
            <person name="Ozaki K."/>
            <person name="Hirao M."/>
            <person name="Ohmori Y."/>
            <person name="Kawabata A."/>
            <person name="Hikiji T."/>
            <person name="Kobatake N."/>
            <person name="Inagaki H."/>
            <person name="Ikema Y."/>
            <person name="Okamoto S."/>
            <person name="Okitani R."/>
            <person name="Kawakami T."/>
            <person name="Noguchi S."/>
            <person name="Itoh T."/>
            <person name="Shigeta K."/>
            <person name="Senba T."/>
            <person name="Matsumura K."/>
            <person name="Nakajima Y."/>
            <person name="Mizuno T."/>
            <person name="Morinaga M."/>
            <person name="Sasaki M."/>
            <person name="Togashi T."/>
            <person name="Oyama M."/>
            <person name="Hata H."/>
            <person name="Watanabe M."/>
            <person name="Komatsu T."/>
            <person name="Mizushima-Sugano J."/>
            <person name="Satoh T."/>
            <person name="Shirai Y."/>
            <person name="Takahashi Y."/>
            <person name="Nakagawa K."/>
            <person name="Okumura K."/>
            <person name="Nagase T."/>
            <person name="Nomura N."/>
            <person name="Kikuchi H."/>
            <person name="Masuho Y."/>
            <person name="Yamashita R."/>
            <person name="Nakai K."/>
            <person name="Yada T."/>
            <person name="Nakamura Y."/>
            <person name="Ohara O."/>
            <person name="Isogai T."/>
            <person name="Sugano S."/>
        </authorList>
    </citation>
    <scope>NUCLEOTIDE SEQUENCE [LARGE SCALE MRNA] OF 1-401</scope>
    <source>
        <tissue>Embryo</tissue>
    </source>
</reference>
<reference key="5">
    <citation type="journal article" date="1997" name="DNA Res.">
        <title>Prediction of the coding sequences of unidentified human genes. VII. The complete sequences of 100 new cDNA clones from brain which can code for large proteins in vitro.</title>
        <authorList>
            <person name="Nagase T."/>
            <person name="Ishikawa K."/>
            <person name="Nakajima D."/>
            <person name="Ohira M."/>
            <person name="Seki N."/>
            <person name="Miyajima N."/>
            <person name="Tanaka A."/>
            <person name="Kotani H."/>
            <person name="Nomura N."/>
            <person name="Ohara O."/>
        </authorList>
    </citation>
    <scope>NUCLEOTIDE SEQUENCE [LARGE SCALE MRNA] OF 455-2063</scope>
    <source>
        <tissue>Brain</tissue>
    </source>
</reference>
<reference key="6">
    <citation type="journal article" date="2002" name="Biochem. J.">
        <title>A mammalian Rho-specific guanine-nucleotide exchange factor (p164-RhoGEF) without a pleckstrin homology domain.</title>
        <authorList>
            <person name="Ruemenapp U."/>
            <person name="Freichel-Blomquist A."/>
            <person name="Wittinghofer B."/>
            <person name="Jakobs K.H."/>
            <person name="Wieland T."/>
        </authorList>
    </citation>
    <scope>FUNCTION</scope>
    <scope>TISSUE SPECIFICITY</scope>
</reference>
<reference key="7">
    <citation type="journal article" date="2008" name="Proc. Natl. Acad. Sci. U.S.A.">
        <title>A quantitative atlas of mitotic phosphorylation.</title>
        <authorList>
            <person name="Dephoure N."/>
            <person name="Zhou C."/>
            <person name="Villen J."/>
            <person name="Beausoleil S.A."/>
            <person name="Bakalarski C.E."/>
            <person name="Elledge S.J."/>
            <person name="Gygi S.P."/>
        </authorList>
    </citation>
    <scope>IDENTIFICATION BY MASS SPECTROMETRY [LARGE SCALE ANALYSIS]</scope>
    <source>
        <tissue>Cervix carcinoma</tissue>
    </source>
</reference>
<reference key="8">
    <citation type="journal article" date="2010" name="Sci. Signal.">
        <title>Quantitative phosphoproteomics reveals widespread full phosphorylation site occupancy during mitosis.</title>
        <authorList>
            <person name="Olsen J.V."/>
            <person name="Vermeulen M."/>
            <person name="Santamaria A."/>
            <person name="Kumar C."/>
            <person name="Miller M.L."/>
            <person name="Jensen L.J."/>
            <person name="Gnad F."/>
            <person name="Cox J."/>
            <person name="Jensen T.S."/>
            <person name="Nigg E.A."/>
            <person name="Brunak S."/>
            <person name="Mann M."/>
        </authorList>
    </citation>
    <scope>PHOSPHORYLATION [LARGE SCALE ANALYSIS] AT SER-461</scope>
    <scope>IDENTIFICATION BY MASS SPECTROMETRY [LARGE SCALE ANALYSIS]</scope>
    <source>
        <tissue>Cervix carcinoma</tissue>
    </source>
</reference>
<reference key="9">
    <citation type="journal article" date="2013" name="J. Proteome Res.">
        <title>Toward a comprehensive characterization of a human cancer cell phosphoproteome.</title>
        <authorList>
            <person name="Zhou H."/>
            <person name="Di Palma S."/>
            <person name="Preisinger C."/>
            <person name="Peng M."/>
            <person name="Polat A.N."/>
            <person name="Heck A.J."/>
            <person name="Mohammed S."/>
        </authorList>
    </citation>
    <scope>PHOSPHORYLATION [LARGE SCALE ANALYSIS] AT SER-410; SER-420; SER-735 AND SER-914</scope>
    <scope>IDENTIFICATION BY MASS SPECTROMETRY [LARGE SCALE ANALYSIS]</scope>
    <source>
        <tissue>Cervix carcinoma</tissue>
    </source>
</reference>
<reference key="10">
    <citation type="journal article" date="2014" name="J. Proteomics">
        <title>An enzyme assisted RP-RPLC approach for in-depth analysis of human liver phosphoproteome.</title>
        <authorList>
            <person name="Bian Y."/>
            <person name="Song C."/>
            <person name="Cheng K."/>
            <person name="Dong M."/>
            <person name="Wang F."/>
            <person name="Huang J."/>
            <person name="Sun D."/>
            <person name="Wang L."/>
            <person name="Ye M."/>
            <person name="Zou H."/>
        </authorList>
    </citation>
    <scope>PHOSPHORYLATION [LARGE SCALE ANALYSIS] AT SER-142 AND SER-546</scope>
    <scope>IDENTIFICATION BY MASS SPECTROMETRY [LARGE SCALE ANALYSIS]</scope>
    <source>
        <tissue>Liver</tissue>
    </source>
</reference>
<comment type="function">
    <text evidence="4">Acts as a guanine nucleotide exchange factor (GEF) for RhoA GTPases.</text>
</comment>
<comment type="interaction">
    <interactant intactId="EBI-7543347">
        <id>Q96PE2</id>
    </interactant>
    <interactant intactId="EBI-740446">
        <id>P32242</id>
        <label>OTX1</label>
    </interactant>
    <organismsDiffer>false</organismsDiffer>
    <experiments>3</experiments>
</comment>
<comment type="interaction">
    <interactant intactId="EBI-7543347">
        <id>Q96PE2</id>
    </interactant>
    <interactant intactId="EBI-4401868">
        <id>Q6T310</id>
        <label>RASL11A</label>
    </interactant>
    <organismsDiffer>false</organismsDiffer>
    <experiments>2</experiments>
</comment>
<comment type="interaction">
    <interactant intactId="EBI-7543347">
        <id>Q96PE2</id>
    </interactant>
    <interactant intactId="EBI-2856342">
        <id>Q96A58</id>
        <label>RERG</label>
    </interactant>
    <organismsDiffer>false</organismsDiffer>
    <experiments>2</experiments>
</comment>
<comment type="tissue specificity">
    <text evidence="4">Highly expressed in the heart.</text>
</comment>
<comment type="online information" name="Undiagnosed Disease Network">
    <link uri="https://undiagnosed.hms.harvard.edu/genes/arhgef17/"/>
    <text>ARHGEF17</text>
</comment>
<feature type="chain" id="PRO_0000286589" description="Rho guanine nucleotide exchange factor 17">
    <location>
        <begin position="1"/>
        <end position="2063"/>
    </location>
</feature>
<feature type="domain" description="DH" evidence="2">
    <location>
        <begin position="1066"/>
        <end position="1254"/>
    </location>
</feature>
<feature type="region of interest" description="Disordered" evidence="3">
    <location>
        <begin position="22"/>
        <end position="365"/>
    </location>
</feature>
<feature type="region of interest" description="Disordered" evidence="3">
    <location>
        <begin position="380"/>
        <end position="466"/>
    </location>
</feature>
<feature type="region of interest" description="Disordered" evidence="3">
    <location>
        <begin position="485"/>
        <end position="581"/>
    </location>
</feature>
<feature type="region of interest" description="Disordered" evidence="3">
    <location>
        <begin position="602"/>
        <end position="958"/>
    </location>
</feature>
<feature type="region of interest" description="Disordered" evidence="3">
    <location>
        <begin position="1034"/>
        <end position="1060"/>
    </location>
</feature>
<feature type="region of interest" description="Disordered" evidence="3">
    <location>
        <begin position="1564"/>
        <end position="1584"/>
    </location>
</feature>
<feature type="region of interest" description="Disordered" evidence="3">
    <location>
        <begin position="1616"/>
        <end position="1719"/>
    </location>
</feature>
<feature type="region of interest" description="Disordered" evidence="3">
    <location>
        <begin position="1991"/>
        <end position="2020"/>
    </location>
</feature>
<feature type="region of interest" description="Disordered" evidence="3">
    <location>
        <begin position="2036"/>
        <end position="2055"/>
    </location>
</feature>
<feature type="compositionally biased region" description="Low complexity" evidence="3">
    <location>
        <begin position="65"/>
        <end position="76"/>
    </location>
</feature>
<feature type="compositionally biased region" description="Basic and acidic residues" evidence="3">
    <location>
        <begin position="87"/>
        <end position="96"/>
    </location>
</feature>
<feature type="compositionally biased region" description="Low complexity" evidence="3">
    <location>
        <begin position="108"/>
        <end position="122"/>
    </location>
</feature>
<feature type="compositionally biased region" description="Low complexity" evidence="3">
    <location>
        <begin position="225"/>
        <end position="250"/>
    </location>
</feature>
<feature type="compositionally biased region" description="Polar residues" evidence="3">
    <location>
        <begin position="313"/>
        <end position="323"/>
    </location>
</feature>
<feature type="compositionally biased region" description="Polar residues" evidence="3">
    <location>
        <begin position="388"/>
        <end position="397"/>
    </location>
</feature>
<feature type="compositionally biased region" description="Basic and acidic residues" evidence="3">
    <location>
        <begin position="445"/>
        <end position="456"/>
    </location>
</feature>
<feature type="compositionally biased region" description="Low complexity" evidence="3">
    <location>
        <begin position="562"/>
        <end position="573"/>
    </location>
</feature>
<feature type="compositionally biased region" description="Polar residues" evidence="3">
    <location>
        <begin position="671"/>
        <end position="680"/>
    </location>
</feature>
<feature type="compositionally biased region" description="Polar residues" evidence="3">
    <location>
        <begin position="754"/>
        <end position="765"/>
    </location>
</feature>
<feature type="compositionally biased region" description="Basic and acidic residues" evidence="3">
    <location>
        <begin position="827"/>
        <end position="836"/>
    </location>
</feature>
<feature type="compositionally biased region" description="Basic residues" evidence="3">
    <location>
        <begin position="917"/>
        <end position="928"/>
    </location>
</feature>
<feature type="compositionally biased region" description="Basic and acidic residues" evidence="3">
    <location>
        <begin position="930"/>
        <end position="939"/>
    </location>
</feature>
<feature type="compositionally biased region" description="Basic and acidic residues" evidence="3">
    <location>
        <begin position="1041"/>
        <end position="1050"/>
    </location>
</feature>
<feature type="compositionally biased region" description="Pro residues" evidence="3">
    <location>
        <begin position="1568"/>
        <end position="1582"/>
    </location>
</feature>
<feature type="compositionally biased region" description="Low complexity" evidence="3">
    <location>
        <begin position="1644"/>
        <end position="1680"/>
    </location>
</feature>
<feature type="compositionally biased region" description="Basic and acidic residues" evidence="3">
    <location>
        <begin position="2004"/>
        <end position="2013"/>
    </location>
</feature>
<feature type="modified residue" description="Phosphoserine" evidence="8">
    <location>
        <position position="142"/>
    </location>
</feature>
<feature type="modified residue" description="Phosphoserine" evidence="1">
    <location>
        <position position="152"/>
    </location>
</feature>
<feature type="modified residue" description="Phosphoserine" evidence="1">
    <location>
        <position position="310"/>
    </location>
</feature>
<feature type="modified residue" description="Phosphoserine" evidence="1">
    <location>
        <position position="326"/>
    </location>
</feature>
<feature type="modified residue" description="Phosphoserine" evidence="1">
    <location>
        <position position="332"/>
    </location>
</feature>
<feature type="modified residue" description="Phosphoserine" evidence="1">
    <location>
        <position position="383"/>
    </location>
</feature>
<feature type="modified residue" description="Phosphoserine" evidence="1">
    <location>
        <position position="387"/>
    </location>
</feature>
<feature type="modified residue" description="Phosphoserine" evidence="1">
    <location>
        <position position="395"/>
    </location>
</feature>
<feature type="modified residue" description="Phosphoserine" evidence="7">
    <location>
        <position position="410"/>
    </location>
</feature>
<feature type="modified residue" description="Phosphoserine" evidence="7">
    <location>
        <position position="420"/>
    </location>
</feature>
<feature type="modified residue" description="Phosphoserine" evidence="6">
    <location>
        <position position="461"/>
    </location>
</feature>
<feature type="modified residue" description="Phosphoserine" evidence="8">
    <location>
        <position position="546"/>
    </location>
</feature>
<feature type="modified residue" description="Phosphoserine" evidence="1">
    <location>
        <position position="619"/>
    </location>
</feature>
<feature type="modified residue" description="Phosphoserine" evidence="1">
    <location>
        <position position="696"/>
    </location>
</feature>
<feature type="modified residue" description="Phosphothreonine" evidence="1">
    <location>
        <position position="699"/>
    </location>
</feature>
<feature type="modified residue" description="Phosphothreonine" evidence="1">
    <location>
        <position position="702"/>
    </location>
</feature>
<feature type="modified residue" description="Phosphoserine" evidence="7">
    <location>
        <position position="735"/>
    </location>
</feature>
<feature type="modified residue" description="Phosphoserine" evidence="7">
    <location>
        <position position="914"/>
    </location>
</feature>
<feature type="modified residue" description="Phosphoserine" evidence="1">
    <location>
        <position position="961"/>
    </location>
</feature>
<feature type="modified residue" description="Phosphoserine" evidence="1">
    <location>
        <position position="1002"/>
    </location>
</feature>
<feature type="modified residue" description="Phosphoserine" evidence="1">
    <location>
        <position position="1331"/>
    </location>
</feature>
<feature type="sequence variant" id="VAR_032132" description="In dbSNP:rs3741150.">
    <original>G</original>
    <variation>E</variation>
    <location>
        <position position="450"/>
    </location>
</feature>
<feature type="sequence variant" id="VAR_032133" description="In dbSNP:rs2298808.">
    <original>A</original>
    <variation>D</variation>
    <location>
        <position position="1465"/>
    </location>
</feature>
<feature type="sequence conflict" description="In Ref. 5; BAA20795." evidence="5" ref="5">
    <original>L</original>
    <variation>F</variation>
    <location>
        <position position="722"/>
    </location>
</feature>
<accession>Q96PE2</accession>
<accession>B2RP20</accession>
<accession>Q86XU2</accession>
<accession>Q8N2S0</accession>
<accession>Q9Y4G3</accession>
<gene>
    <name type="primary">ARHGEF17</name>
    <name type="synonym">KIAA0337</name>
    <name type="synonym">TEM4</name>
</gene>
<sequence>MADGAPRPQLYRSVSFKLLERWSGGPGLREEDTDTPGLRRRASCRPTTAARGQPSRRVSKLASGPLAAPAQPRPLRSLSPSVRQLSRRFDAPRLDDGSAGTRDGGVLPAAAEEAAEGPARGAWPSVTEMRKLFGGPGSRRPSADSESPGTPSPDGAAWEPPARESRQPPTPPPRTCFPLAGLRSARPLTGPETEGRLRRPQQQQERAQRPADGLHSWHIFSQPQAGARASCSSSSIAASYPVSRSRAASSSEEEEEGPPQLPGAQSPAYHGGHSSGSDDDRDGEGGHRWGGRPGLRPGSSLLDQDCRPDSDGLNLSSMNSAGVSGSPEPPTSPRAPREEGLREWGSGSPPCVPGPQEGLRPMSDSVGGAFRVAKVSFPSYLASPAGSRGSSRYSSTETLKDDDLWSSRGSGGWGVYRSPSFGAGEGLLRSQARTRAKGPGGTSRALRDGGFEPEKSRQRKSLSNPDIASETLTLLSFLRSDLSELRVRKPGGSSGDRGSNPLDGRDSPSAGGPVGQLEPIPIPAPASPGTRPTLKDLTATLRRAKSFTCSEKPMARRLPRTSALKSSSSELLLTGPGAEEDPLPLIVQDQYVQEARQVFEKIQRMGAQQDDGSDAPPGSPDWAGDVTRGQRSQEELSGPESSLTDEGIGADPEPPVAAFCGLGTTGMWRPLSSSSAQTNHHGPGTEDSLGGWALVSPETPPTPGALRRRRKVPPSGSGGSELSNGEAGEAYRSLSDPIPQRHRAATSEEPTGFSVDSNLLGSLSPKTGLPATSAMDEGLTSGHSDWSVGSEESKGYQEVIQSIVQGPGTLGRVVDDRIAGKAPKKKSLSDPSRRGELAGPGFEGPGGEPIREVEPMLPPSSSEPILVEQRAEPEEPGATRSRAQSERALPEALPPPATAHRNFHLDPKLADILSPRLIRRGSKKRPARSSHQELRRDEGSQDQTGSLSRARPSSRHVRHASVPATFMPIVVPEPPTSVGPPVAVPEPIGFPTRAHPTLQAPSLEDVTKQYMLNLHSGEVPAPVPVDMPCLPLAAPPSAEAKPPEAARPADEPTPASKCCSKPQVDMRKHVAMTLLDTEQSYVESLRTLMQGYMQPLKQPENSVLCDPSLVDEIFDQIPELLEHHEQFLEQVRHCMQTWHAQQKVGALLVQSFSKDVLVNIYSAYIDNFLNAKDAVRVAKEARPAFLKFLEQSMRENKEKQALSDLMIKPVQRIPRYELLVKDLLKHTPEDHPDHPLLLEAQRNIKQVAERINKGVRSAEEAERHARVLQEIEAHIEGMEDLQAPLRRFLRQEMVIEVKAIGGKKDRSLFLFTDLIVCTTLKRKSGSLRRSSMSLYTAASVIDTASKYKMLWKLPLEDADIIKGASQATNRENIQKAISRLDEDLTTLGQMSKLSESLGFPHQSLDDALRDLSAAMHRDLSEKQALCYALSFPPTKLELCATRPEGTDSYIFEFPHPDARLGFEQAFDEAKRKLASSKSCLDPEFLKAIPIMKTRSGMQFSCAAPTLNSCPEPSPEVWVCNSDGYVGQVCLLSLRAEPDVEACIAVCSARILCIGAVPGLQPRCHREPPPSLRSPPETAPEPAGPELDVEAAADEEAATLAEPGPQPCLHISIAGSGLEMTPGLGEGDPRPELVPFDSDSDDESSPSPSGTLQSQASRSTISSSFGNEETPSSKEATAETTSSEEEQEPGFLPLSGSFGPGGPCGTSPMDGRALRRSSHGSFTRGSLEDLLSVDPEAYQSSVWLGTEDGCVHVYQSSDSIRDRRNSMKLQHAASVTCILYLNNQVFVSLANGELVVYQREAGHFWDPQNFKSVTLGTQGSPITKMVSVGGRLWCGCQNRVLVLSPDTLQLEHMFYVGQDSSRCVACMVDSSLGVWVTLKGSAHVCLYHPDTFEQLAEVDVTPPVHRMLAGSDAIIRQHKAACLRITALLVCEELLWVGTSAGVVLTMPTSPGTVSCPRAPLSPTGLGQGHTGHVRFLAAVQLPDGFNLLCPTPPPPPDTGPEKLPSLEHRDSPWHRGPAPARPKMLVISGGDGYEDFRLSSGGGSSSETVGRDDSTNHLLLWRV</sequence>
<organism>
    <name type="scientific">Homo sapiens</name>
    <name type="common">Human</name>
    <dbReference type="NCBI Taxonomy" id="9606"/>
    <lineage>
        <taxon>Eukaryota</taxon>
        <taxon>Metazoa</taxon>
        <taxon>Chordata</taxon>
        <taxon>Craniata</taxon>
        <taxon>Vertebrata</taxon>
        <taxon>Euteleostomi</taxon>
        <taxon>Mammalia</taxon>
        <taxon>Eutheria</taxon>
        <taxon>Euarchontoglires</taxon>
        <taxon>Primates</taxon>
        <taxon>Haplorrhini</taxon>
        <taxon>Catarrhini</taxon>
        <taxon>Hominidae</taxon>
        <taxon>Homo</taxon>
    </lineage>
</organism>
<name>ARHGH_HUMAN</name>
<dbReference type="EMBL" id="AF378754">
    <property type="protein sequence ID" value="AAL11991.1"/>
    <property type="molecule type" value="mRNA"/>
</dbReference>
<dbReference type="EMBL" id="CH471076">
    <property type="protein sequence ID" value="EAW74891.1"/>
    <property type="molecule type" value="Genomic_DNA"/>
</dbReference>
<dbReference type="EMBL" id="BC050031">
    <property type="protein sequence ID" value="AAH50031.1"/>
    <property type="molecule type" value="mRNA"/>
</dbReference>
<dbReference type="EMBL" id="BC137228">
    <property type="protein sequence ID" value="AAI37229.1"/>
    <property type="molecule type" value="mRNA"/>
</dbReference>
<dbReference type="EMBL" id="AK074500">
    <property type="status" value="NOT_ANNOTATED_CDS"/>
    <property type="molecule type" value="mRNA"/>
</dbReference>
<dbReference type="EMBL" id="AB002335">
    <property type="protein sequence ID" value="BAA20795.2"/>
    <property type="molecule type" value="mRNA"/>
</dbReference>
<dbReference type="CCDS" id="CCDS8221.1"/>
<dbReference type="RefSeq" id="NP_055601.2">
    <property type="nucleotide sequence ID" value="NM_014786.3"/>
</dbReference>
<dbReference type="SMR" id="Q96PE2"/>
<dbReference type="BioGRID" id="115166">
    <property type="interactions" value="55"/>
</dbReference>
<dbReference type="FunCoup" id="Q96PE2">
    <property type="interactions" value="862"/>
</dbReference>
<dbReference type="IntAct" id="Q96PE2">
    <property type="interactions" value="32"/>
</dbReference>
<dbReference type="MINT" id="Q96PE2"/>
<dbReference type="STRING" id="9606.ENSP00000263674"/>
<dbReference type="GlyGen" id="Q96PE2">
    <property type="glycosylation" value="8 sites, 1 O-linked glycan (3 sites)"/>
</dbReference>
<dbReference type="iPTMnet" id="Q96PE2"/>
<dbReference type="PhosphoSitePlus" id="Q96PE2"/>
<dbReference type="BioMuta" id="ARHGEF17"/>
<dbReference type="DMDM" id="74724250"/>
<dbReference type="jPOST" id="Q96PE2"/>
<dbReference type="MassIVE" id="Q96PE2"/>
<dbReference type="PaxDb" id="9606-ENSP00000263674"/>
<dbReference type="PeptideAtlas" id="Q96PE2"/>
<dbReference type="ProteomicsDB" id="77677"/>
<dbReference type="Pumba" id="Q96PE2"/>
<dbReference type="Antibodypedia" id="947">
    <property type="antibodies" value="74 antibodies from 27 providers"/>
</dbReference>
<dbReference type="DNASU" id="9828"/>
<dbReference type="Ensembl" id="ENST00000263674.4">
    <property type="protein sequence ID" value="ENSP00000263674.3"/>
    <property type="gene ID" value="ENSG00000110237.5"/>
</dbReference>
<dbReference type="GeneID" id="9828"/>
<dbReference type="KEGG" id="hsa:9828"/>
<dbReference type="MANE-Select" id="ENST00000263674.4">
    <property type="protein sequence ID" value="ENSP00000263674.3"/>
    <property type="RefSeq nucleotide sequence ID" value="NM_014786.4"/>
    <property type="RefSeq protein sequence ID" value="NP_055601.2"/>
</dbReference>
<dbReference type="UCSC" id="uc001otu.4">
    <property type="organism name" value="human"/>
</dbReference>
<dbReference type="AGR" id="HGNC:21726"/>
<dbReference type="CTD" id="9828"/>
<dbReference type="DisGeNET" id="9828"/>
<dbReference type="GeneCards" id="ARHGEF17"/>
<dbReference type="HGNC" id="HGNC:21726">
    <property type="gene designation" value="ARHGEF17"/>
</dbReference>
<dbReference type="HPA" id="ENSG00000110237">
    <property type="expression patterns" value="Low tissue specificity"/>
</dbReference>
<dbReference type="MalaCards" id="ARHGEF17"/>
<dbReference type="neXtProt" id="NX_Q96PE2"/>
<dbReference type="OpenTargets" id="ENSG00000110237"/>
<dbReference type="PharmGKB" id="PA134884537"/>
<dbReference type="VEuPathDB" id="HostDB:ENSG00000110237"/>
<dbReference type="eggNOG" id="KOG3522">
    <property type="taxonomic scope" value="Eukaryota"/>
</dbReference>
<dbReference type="GeneTree" id="ENSGT00940000153798"/>
<dbReference type="HOGENOM" id="CLU_237760_0_0_1"/>
<dbReference type="InParanoid" id="Q96PE2"/>
<dbReference type="OMA" id="IPQRHRT"/>
<dbReference type="OrthoDB" id="4066896at2759"/>
<dbReference type="PAN-GO" id="Q96PE2">
    <property type="GO annotations" value="1 GO annotation based on evolutionary models"/>
</dbReference>
<dbReference type="PhylomeDB" id="Q96PE2"/>
<dbReference type="TreeFam" id="TF324157"/>
<dbReference type="PathwayCommons" id="Q96PE2"/>
<dbReference type="Reactome" id="R-HSA-193648">
    <property type="pathway name" value="NRAGE signals death through JNK"/>
</dbReference>
<dbReference type="Reactome" id="R-HSA-416482">
    <property type="pathway name" value="G alpha (12/13) signalling events"/>
</dbReference>
<dbReference type="Reactome" id="R-HSA-8980692">
    <property type="pathway name" value="RHOA GTPase cycle"/>
</dbReference>
<dbReference type="Reactome" id="R-HSA-9013026">
    <property type="pathway name" value="RHOB GTPase cycle"/>
</dbReference>
<dbReference type="Reactome" id="R-HSA-9013106">
    <property type="pathway name" value="RHOC GTPase cycle"/>
</dbReference>
<dbReference type="SignaLink" id="Q96PE2"/>
<dbReference type="SIGNOR" id="Q96PE2"/>
<dbReference type="BioGRID-ORCS" id="9828">
    <property type="hits" value="27 hits in 1151 CRISPR screens"/>
</dbReference>
<dbReference type="ChiTaRS" id="ARHGEF17">
    <property type="organism name" value="human"/>
</dbReference>
<dbReference type="GenomeRNAi" id="9828"/>
<dbReference type="Pharos" id="Q96PE2">
    <property type="development level" value="Tbio"/>
</dbReference>
<dbReference type="PRO" id="PR:Q96PE2"/>
<dbReference type="Proteomes" id="UP000005640">
    <property type="component" value="Chromosome 11"/>
</dbReference>
<dbReference type="RNAct" id="Q96PE2">
    <property type="molecule type" value="protein"/>
</dbReference>
<dbReference type="Bgee" id="ENSG00000110237">
    <property type="expression patterns" value="Expressed in descending thoracic aorta and 183 other cell types or tissues"/>
</dbReference>
<dbReference type="ExpressionAtlas" id="Q96PE2">
    <property type="expression patterns" value="baseline and differential"/>
</dbReference>
<dbReference type="GO" id="GO:0005737">
    <property type="term" value="C:cytoplasm"/>
    <property type="evidence" value="ECO:0000318"/>
    <property type="project" value="GO_Central"/>
</dbReference>
<dbReference type="GO" id="GO:0005829">
    <property type="term" value="C:cytosol"/>
    <property type="evidence" value="ECO:0000304"/>
    <property type="project" value="Reactome"/>
</dbReference>
<dbReference type="GO" id="GO:0005085">
    <property type="term" value="F:guanyl-nucleotide exchange factor activity"/>
    <property type="evidence" value="ECO:0000314"/>
    <property type="project" value="MGI"/>
</dbReference>
<dbReference type="GO" id="GO:0030036">
    <property type="term" value="P:actin cytoskeleton organization"/>
    <property type="evidence" value="ECO:0000314"/>
    <property type="project" value="MGI"/>
</dbReference>
<dbReference type="GO" id="GO:0051056">
    <property type="term" value="P:regulation of small GTPase mediated signal transduction"/>
    <property type="evidence" value="ECO:0000304"/>
    <property type="project" value="Reactome"/>
</dbReference>
<dbReference type="CDD" id="cd00160">
    <property type="entry name" value="RhoGEF"/>
    <property type="match status" value="1"/>
</dbReference>
<dbReference type="FunFam" id="1.20.900.10:FF:000025">
    <property type="entry name" value="Rho guanine nucleotide exchange factor 17"/>
    <property type="match status" value="1"/>
</dbReference>
<dbReference type="FunFam" id="2.130.10.10:FF:000206">
    <property type="entry name" value="Rho guanine nucleotide exchange factor 17"/>
    <property type="match status" value="1"/>
</dbReference>
<dbReference type="FunFam" id="2.30.29.30:FF:000434">
    <property type="entry name" value="Rho guanine nucleotide exchange factor 17"/>
    <property type="match status" value="1"/>
</dbReference>
<dbReference type="Gene3D" id="1.20.900.10">
    <property type="entry name" value="Dbl homology (DH) domain"/>
    <property type="match status" value="1"/>
</dbReference>
<dbReference type="Gene3D" id="2.30.29.30">
    <property type="entry name" value="Pleckstrin-homology domain (PH domain)/Phosphotyrosine-binding domain (PTB)"/>
    <property type="match status" value="1"/>
</dbReference>
<dbReference type="Gene3D" id="2.130.10.10">
    <property type="entry name" value="YVTN repeat-like/Quinoprotein amine dehydrogenase"/>
    <property type="match status" value="1"/>
</dbReference>
<dbReference type="InterPro" id="IPR039919">
    <property type="entry name" value="ARHGEF10/ARHGEF17"/>
</dbReference>
<dbReference type="InterPro" id="IPR035899">
    <property type="entry name" value="DBL_dom_sf"/>
</dbReference>
<dbReference type="InterPro" id="IPR000219">
    <property type="entry name" value="DH_dom"/>
</dbReference>
<dbReference type="InterPro" id="IPR011993">
    <property type="entry name" value="PH-like_dom_sf"/>
</dbReference>
<dbReference type="InterPro" id="IPR015943">
    <property type="entry name" value="WD40/YVTN_repeat-like_dom_sf"/>
</dbReference>
<dbReference type="InterPro" id="IPR036322">
    <property type="entry name" value="WD40_repeat_dom_sf"/>
</dbReference>
<dbReference type="PANTHER" id="PTHR12877">
    <property type="entry name" value="RHO GUANINE NUCLEOTIDE EXCHANGE FACTOR"/>
    <property type="match status" value="1"/>
</dbReference>
<dbReference type="PANTHER" id="PTHR12877:SF15">
    <property type="entry name" value="RHO GUANINE NUCLEOTIDE EXCHANGE FACTOR 17"/>
    <property type="match status" value="1"/>
</dbReference>
<dbReference type="Pfam" id="PF19057">
    <property type="entry name" value="PH_19"/>
    <property type="match status" value="1"/>
</dbReference>
<dbReference type="Pfam" id="PF00621">
    <property type="entry name" value="RhoGEF"/>
    <property type="match status" value="1"/>
</dbReference>
<dbReference type="Pfam" id="PF19056">
    <property type="entry name" value="WD40_2"/>
    <property type="match status" value="1"/>
</dbReference>
<dbReference type="SMART" id="SM00325">
    <property type="entry name" value="RhoGEF"/>
    <property type="match status" value="1"/>
</dbReference>
<dbReference type="SUPFAM" id="SSF48065">
    <property type="entry name" value="DBL homology domain (DH-domain)"/>
    <property type="match status" value="1"/>
</dbReference>
<dbReference type="SUPFAM" id="SSF50729">
    <property type="entry name" value="PH domain-like"/>
    <property type="match status" value="1"/>
</dbReference>
<dbReference type="SUPFAM" id="SSF50978">
    <property type="entry name" value="WD40 repeat-like"/>
    <property type="match status" value="1"/>
</dbReference>
<dbReference type="PROSITE" id="PS50010">
    <property type="entry name" value="DH_2"/>
    <property type="match status" value="1"/>
</dbReference>
<keyword id="KW-0344">Guanine-nucleotide releasing factor</keyword>
<keyword id="KW-0597">Phosphoprotein</keyword>
<keyword id="KW-1267">Proteomics identification</keyword>
<keyword id="KW-1185">Reference proteome</keyword>
<evidence type="ECO:0000250" key="1">
    <source>
        <dbReference type="UniProtKB" id="Q80U35"/>
    </source>
</evidence>
<evidence type="ECO:0000255" key="2">
    <source>
        <dbReference type="PROSITE-ProRule" id="PRU00062"/>
    </source>
</evidence>
<evidence type="ECO:0000256" key="3">
    <source>
        <dbReference type="SAM" id="MobiDB-lite"/>
    </source>
</evidence>
<evidence type="ECO:0000269" key="4">
    <source>
    </source>
</evidence>
<evidence type="ECO:0000305" key="5"/>
<evidence type="ECO:0007744" key="6">
    <source>
    </source>
</evidence>
<evidence type="ECO:0007744" key="7">
    <source>
    </source>
</evidence>
<evidence type="ECO:0007744" key="8">
    <source>
    </source>
</evidence>
<protein>
    <recommendedName>
        <fullName>Rho guanine nucleotide exchange factor 17</fullName>
    </recommendedName>
    <alternativeName>
        <fullName>164 kDa Rho-specific guanine-nucleotide exchange factor</fullName>
        <shortName>p164-RhoGEF</shortName>
        <shortName>p164RhoGEF</shortName>
    </alternativeName>
    <alternativeName>
        <fullName>Tumor endothelial marker 4</fullName>
    </alternativeName>
</protein>
<proteinExistence type="evidence at protein level"/>